<dbReference type="EC" id="4.3.3.7" evidence="1"/>
<dbReference type="EMBL" id="CP000680">
    <property type="protein sequence ID" value="ABP84427.1"/>
    <property type="molecule type" value="Genomic_DNA"/>
</dbReference>
<dbReference type="SMR" id="A4XSW1"/>
<dbReference type="STRING" id="399739.Pmen_1663"/>
<dbReference type="KEGG" id="pmy:Pmen_1663"/>
<dbReference type="PATRIC" id="fig|399739.8.peg.1685"/>
<dbReference type="eggNOG" id="COG0329">
    <property type="taxonomic scope" value="Bacteria"/>
</dbReference>
<dbReference type="HOGENOM" id="CLU_049343_7_1_6"/>
<dbReference type="OrthoDB" id="9782828at2"/>
<dbReference type="UniPathway" id="UPA00034">
    <property type="reaction ID" value="UER00017"/>
</dbReference>
<dbReference type="GO" id="GO:0005829">
    <property type="term" value="C:cytosol"/>
    <property type="evidence" value="ECO:0007669"/>
    <property type="project" value="TreeGrafter"/>
</dbReference>
<dbReference type="GO" id="GO:0008840">
    <property type="term" value="F:4-hydroxy-tetrahydrodipicolinate synthase activity"/>
    <property type="evidence" value="ECO:0007669"/>
    <property type="project" value="UniProtKB-UniRule"/>
</dbReference>
<dbReference type="GO" id="GO:0019877">
    <property type="term" value="P:diaminopimelate biosynthetic process"/>
    <property type="evidence" value="ECO:0007669"/>
    <property type="project" value="UniProtKB-UniRule"/>
</dbReference>
<dbReference type="GO" id="GO:0009089">
    <property type="term" value="P:lysine biosynthetic process via diaminopimelate"/>
    <property type="evidence" value="ECO:0007669"/>
    <property type="project" value="UniProtKB-UniRule"/>
</dbReference>
<dbReference type="CDD" id="cd00950">
    <property type="entry name" value="DHDPS"/>
    <property type="match status" value="1"/>
</dbReference>
<dbReference type="Gene3D" id="3.20.20.70">
    <property type="entry name" value="Aldolase class I"/>
    <property type="match status" value="1"/>
</dbReference>
<dbReference type="HAMAP" id="MF_00418">
    <property type="entry name" value="DapA"/>
    <property type="match status" value="1"/>
</dbReference>
<dbReference type="InterPro" id="IPR013785">
    <property type="entry name" value="Aldolase_TIM"/>
</dbReference>
<dbReference type="InterPro" id="IPR005263">
    <property type="entry name" value="DapA"/>
</dbReference>
<dbReference type="InterPro" id="IPR002220">
    <property type="entry name" value="DapA-like"/>
</dbReference>
<dbReference type="InterPro" id="IPR020625">
    <property type="entry name" value="Schiff_base-form_aldolases_AS"/>
</dbReference>
<dbReference type="InterPro" id="IPR020624">
    <property type="entry name" value="Schiff_base-form_aldolases_CS"/>
</dbReference>
<dbReference type="NCBIfam" id="TIGR00674">
    <property type="entry name" value="dapA"/>
    <property type="match status" value="1"/>
</dbReference>
<dbReference type="PANTHER" id="PTHR12128:SF66">
    <property type="entry name" value="4-HYDROXY-2-OXOGLUTARATE ALDOLASE, MITOCHONDRIAL"/>
    <property type="match status" value="1"/>
</dbReference>
<dbReference type="PANTHER" id="PTHR12128">
    <property type="entry name" value="DIHYDRODIPICOLINATE SYNTHASE"/>
    <property type="match status" value="1"/>
</dbReference>
<dbReference type="Pfam" id="PF00701">
    <property type="entry name" value="DHDPS"/>
    <property type="match status" value="1"/>
</dbReference>
<dbReference type="PIRSF" id="PIRSF001365">
    <property type="entry name" value="DHDPS"/>
    <property type="match status" value="1"/>
</dbReference>
<dbReference type="PRINTS" id="PR00146">
    <property type="entry name" value="DHPICSNTHASE"/>
</dbReference>
<dbReference type="SMART" id="SM01130">
    <property type="entry name" value="DHDPS"/>
    <property type="match status" value="1"/>
</dbReference>
<dbReference type="SUPFAM" id="SSF51569">
    <property type="entry name" value="Aldolase"/>
    <property type="match status" value="1"/>
</dbReference>
<dbReference type="PROSITE" id="PS00665">
    <property type="entry name" value="DHDPS_1"/>
    <property type="match status" value="1"/>
</dbReference>
<dbReference type="PROSITE" id="PS00666">
    <property type="entry name" value="DHDPS_2"/>
    <property type="match status" value="1"/>
</dbReference>
<sequence>MIAGSMVALVTPMDAQGGLDWEALSKLVDFHLQEGTNAIVAVGTTGESATLDVGEHIEVIKRVVDQVAGRIPVIAGTGGNSTRESVELTRAAKEVGADACLLVTPYYNKPTQEGLYLHFRHIAEAVAIPQILYNVPGRTVCDMLPETVERLSKIDNIIGIKEATGDLQRAQEVLDRVSKDFLVYSGDDATAVELMLLGGKGNISVTANVAPRAMSDLCAAAMRGEAAIARAINDRLMPLHKALFLESNPIPVKWALHEMGLMGDGIRLPLTWLSPRCHEPLRQAMRQCGVLA</sequence>
<gene>
    <name evidence="1" type="primary">dapA</name>
    <name type="ordered locus">Pmen_1663</name>
</gene>
<feature type="chain" id="PRO_1000050248" description="4-hydroxy-tetrahydrodipicolinate synthase">
    <location>
        <begin position="1"/>
        <end position="292"/>
    </location>
</feature>
<feature type="active site" description="Proton donor/acceptor" evidence="1">
    <location>
        <position position="133"/>
    </location>
</feature>
<feature type="active site" description="Schiff-base intermediate with substrate" evidence="1">
    <location>
        <position position="161"/>
    </location>
</feature>
<feature type="binding site" evidence="1">
    <location>
        <position position="45"/>
    </location>
    <ligand>
        <name>pyruvate</name>
        <dbReference type="ChEBI" id="CHEBI:15361"/>
    </ligand>
</feature>
<feature type="binding site" evidence="1">
    <location>
        <position position="203"/>
    </location>
    <ligand>
        <name>pyruvate</name>
        <dbReference type="ChEBI" id="CHEBI:15361"/>
    </ligand>
</feature>
<feature type="site" description="Part of a proton relay during catalysis" evidence="1">
    <location>
        <position position="44"/>
    </location>
</feature>
<feature type="site" description="Part of a proton relay during catalysis" evidence="1">
    <location>
        <position position="107"/>
    </location>
</feature>
<organism>
    <name type="scientific">Ectopseudomonas mendocina (strain ymp)</name>
    <name type="common">Pseudomonas mendocina</name>
    <dbReference type="NCBI Taxonomy" id="399739"/>
    <lineage>
        <taxon>Bacteria</taxon>
        <taxon>Pseudomonadati</taxon>
        <taxon>Pseudomonadota</taxon>
        <taxon>Gammaproteobacteria</taxon>
        <taxon>Pseudomonadales</taxon>
        <taxon>Pseudomonadaceae</taxon>
        <taxon>Ectopseudomonas</taxon>
    </lineage>
</organism>
<name>DAPA_ECTM1</name>
<keyword id="KW-0028">Amino-acid biosynthesis</keyword>
<keyword id="KW-0963">Cytoplasm</keyword>
<keyword id="KW-0220">Diaminopimelate biosynthesis</keyword>
<keyword id="KW-0456">Lyase</keyword>
<keyword id="KW-0457">Lysine biosynthesis</keyword>
<keyword id="KW-0704">Schiff base</keyword>
<evidence type="ECO:0000255" key="1">
    <source>
        <dbReference type="HAMAP-Rule" id="MF_00418"/>
    </source>
</evidence>
<evidence type="ECO:0000305" key="2"/>
<reference key="1">
    <citation type="submission" date="2007-04" db="EMBL/GenBank/DDBJ databases">
        <title>Complete sequence of Pseudomonas mendocina ymp.</title>
        <authorList>
            <consortium name="US DOE Joint Genome Institute"/>
            <person name="Copeland A."/>
            <person name="Lucas S."/>
            <person name="Lapidus A."/>
            <person name="Barry K."/>
            <person name="Glavina del Rio T."/>
            <person name="Dalin E."/>
            <person name="Tice H."/>
            <person name="Pitluck S."/>
            <person name="Kiss H."/>
            <person name="Brettin T."/>
            <person name="Detter J.C."/>
            <person name="Bruce D."/>
            <person name="Han C."/>
            <person name="Schmutz J."/>
            <person name="Larimer F."/>
            <person name="Land M."/>
            <person name="Hauser L."/>
            <person name="Kyrpides N."/>
            <person name="Mikhailova N."/>
            <person name="Hersman L."/>
            <person name="Dubois J."/>
            <person name="Maurice P."/>
            <person name="Richardson P."/>
        </authorList>
    </citation>
    <scope>NUCLEOTIDE SEQUENCE [LARGE SCALE GENOMIC DNA]</scope>
    <source>
        <strain>ymp</strain>
    </source>
</reference>
<accession>A4XSW1</accession>
<comment type="function">
    <text evidence="1">Catalyzes the condensation of (S)-aspartate-beta-semialdehyde [(S)-ASA] and pyruvate to 4-hydroxy-tetrahydrodipicolinate (HTPA).</text>
</comment>
<comment type="catalytic activity">
    <reaction evidence="1">
        <text>L-aspartate 4-semialdehyde + pyruvate = (2S,4S)-4-hydroxy-2,3,4,5-tetrahydrodipicolinate + H2O + H(+)</text>
        <dbReference type="Rhea" id="RHEA:34171"/>
        <dbReference type="ChEBI" id="CHEBI:15361"/>
        <dbReference type="ChEBI" id="CHEBI:15377"/>
        <dbReference type="ChEBI" id="CHEBI:15378"/>
        <dbReference type="ChEBI" id="CHEBI:67139"/>
        <dbReference type="ChEBI" id="CHEBI:537519"/>
        <dbReference type="EC" id="4.3.3.7"/>
    </reaction>
</comment>
<comment type="pathway">
    <text evidence="1">Amino-acid biosynthesis; L-lysine biosynthesis via DAP pathway; (S)-tetrahydrodipicolinate from L-aspartate: step 3/4.</text>
</comment>
<comment type="subunit">
    <text evidence="1">Homodimer.</text>
</comment>
<comment type="subcellular location">
    <subcellularLocation>
        <location evidence="1">Cytoplasm</location>
    </subcellularLocation>
</comment>
<comment type="similarity">
    <text evidence="1">Belongs to the DapA family.</text>
</comment>
<comment type="caution">
    <text evidence="2">Was originally thought to be a dihydrodipicolinate synthase (DHDPS), catalyzing the condensation of (S)-aspartate-beta-semialdehyde [(S)-ASA] and pyruvate to dihydrodipicolinate (DHDP). However, it was shown in E.coli that the product of the enzymatic reaction is not dihydrodipicolinate but in fact (4S)-4-hydroxy-2,3,4,5-tetrahydro-(2S)-dipicolinic acid (HTPA), and that the consecutive dehydration reaction leading to DHDP is not spontaneous but catalyzed by DapB.</text>
</comment>
<proteinExistence type="inferred from homology"/>
<protein>
    <recommendedName>
        <fullName evidence="1">4-hydroxy-tetrahydrodipicolinate synthase</fullName>
        <shortName evidence="1">HTPA synthase</shortName>
        <ecNumber evidence="1">4.3.3.7</ecNumber>
    </recommendedName>
</protein>